<feature type="signal peptide" evidence="1">
    <location>
        <begin position="1"/>
        <end position="24"/>
    </location>
</feature>
<feature type="chain" id="PRO_0000030849" description="Angiogenin">
    <location>
        <begin position="25"/>
        <end position="146"/>
    </location>
</feature>
<feature type="short sequence motif" description="Nucleolar localization signal" evidence="1">
    <location>
        <begin position="55"/>
        <end position="59"/>
    </location>
</feature>
<feature type="active site" description="Proton acceptor" evidence="1">
    <location>
        <position position="37"/>
    </location>
</feature>
<feature type="active site" description="Proton donor" evidence="1">
    <location>
        <position position="138"/>
    </location>
</feature>
<feature type="binding site" evidence="1">
    <location>
        <position position="45"/>
    </location>
    <ligand>
        <name>tRNA</name>
        <dbReference type="ChEBI" id="CHEBI:17843"/>
    </ligand>
</feature>
<feature type="binding site" evidence="1">
    <location>
        <position position="105"/>
    </location>
    <ligand>
        <name>tRNA</name>
        <dbReference type="ChEBI" id="CHEBI:17843"/>
    </ligand>
</feature>
<feature type="binding site" evidence="1">
    <location>
        <position position="127"/>
    </location>
    <ligand>
        <name>tRNA</name>
        <dbReference type="ChEBI" id="CHEBI:17843"/>
    </ligand>
</feature>
<feature type="modified residue" description="Pyrrolidone carboxylic acid" evidence="1">
    <location>
        <position position="25"/>
    </location>
</feature>
<feature type="disulfide bond" evidence="1">
    <location>
        <begin position="50"/>
        <end position="105"/>
    </location>
</feature>
<feature type="disulfide bond" evidence="1">
    <location>
        <begin position="63"/>
        <end position="116"/>
    </location>
</feature>
<feature type="disulfide bond" evidence="1">
    <location>
        <begin position="81"/>
        <end position="131"/>
    </location>
</feature>
<organism>
    <name type="scientific">Rhinopithecus bieti</name>
    <name type="common">Black snub-nosed monkey</name>
    <name type="synonym">Pygathrix bieti</name>
    <dbReference type="NCBI Taxonomy" id="61621"/>
    <lineage>
        <taxon>Eukaryota</taxon>
        <taxon>Metazoa</taxon>
        <taxon>Chordata</taxon>
        <taxon>Craniata</taxon>
        <taxon>Vertebrata</taxon>
        <taxon>Euteleostomi</taxon>
        <taxon>Mammalia</taxon>
        <taxon>Eutheria</taxon>
        <taxon>Euarchontoglires</taxon>
        <taxon>Primates</taxon>
        <taxon>Haplorrhini</taxon>
        <taxon>Catarrhini</taxon>
        <taxon>Cercopithecidae</taxon>
        <taxon>Colobinae</taxon>
        <taxon>Rhinopithecus</taxon>
    </lineage>
</organism>
<evidence type="ECO:0000250" key="1">
    <source>
        <dbReference type="UniProtKB" id="P03950"/>
    </source>
</evidence>
<evidence type="ECO:0000250" key="2">
    <source>
        <dbReference type="UniProtKB" id="P21570"/>
    </source>
</evidence>
<evidence type="ECO:0000305" key="3"/>
<protein>
    <recommendedName>
        <fullName>Angiogenin</fullName>
        <ecNumber evidence="1">3.1.27.-</ecNumber>
    </recommendedName>
    <alternativeName>
        <fullName>Ribonuclease 5</fullName>
        <shortName>RNase 5</shortName>
    </alternativeName>
</protein>
<comment type="function">
    <text evidence="1 2">Secreted ribonuclease that can either promote or restrict cell proliferation of target cells, depending on the context. Endocytosed in target cells via its receptor PLXNB2 and translocates to the cytoplasm or nucleus. Under stress conditions, localizes to the cytoplasm and promotes the assembly of stress granules (SGs): specifically cleaves a subset of tRNAs within anticodon loops to produce tRNA-derived stress-induced fragments (tiRNAs), resulting in translation repression and inhibition of cell proliferation (By similarity). tiRNas also prevent formation of apoptosome, thereby promoting cell survival (By similarity). Preferentially cleaves RNAs between a pyrimidine and an adenosine residue, suggesting that it cleaves the anticodon loop of tRNA(Ala) (32-UUAGCAU-38) after positions 33 and 36. Cleaves a subset of tRNAs, including tRNA(Ala), tRNA(Glu), tRNA(Gly), tRNA(Lys), tRNA(Val), tRNA(His), tRNA(Asp) and tRNA(Sec). Under growth conditions and in differentiated cells, translocates to the nucleus and stimulates ribosomal RNA (rRNA) transcription, including that containing the initiation site sequences of 45S rRNA, thereby promoting cell growth and proliferation. Angiogenin induces vascularization of normal and malignant tissues via its ability to promote rRNA transcription. Involved in hematopoietic stem and progenitor cell (HSPC) growth and survival by promoting rRNA transcription in growth conditions and inhibiting translation in response to stress, respectively. Mediates the crosstalk between myeloid and intestinal epithelial cells to protect the intestinal epithelial barrier integrity: secreted by myeloid cells and promotes intestinal epithelial cells proliferation and survival (By similarity). Also mediates osteoclast-endothelial cell crosstalk in growing bone: produced by osteoclasts and protects the neighboring vascular cells against senescence by promoting rRNA transcription (By similarity).</text>
</comment>
<comment type="activity regulation">
    <text evidence="1">Has weak tRNA ribonuclease activity by itself due to partial autoinhibition by its C-terminus, which folds into a short alpha-helix that partially occludes the substrate-binding site. In absence of stress, the ribonuclease activity is inhibited by RNH1 in the cytoplasm. In response to stress, dissociates from RNH1 in the cytoplasm and associates with cytoplasmic ribosomes with vacant A-sites: ribosomes directly activate the tRNA ribonuclease activity of ANG by refolding the C-terminal alpha-helix. In response to stress, the angiogenic activity of ANG is inhibited by RNH1 in the nucleus.</text>
</comment>
<comment type="subunit">
    <text evidence="1">Homodimer. Interacts with RNH1; inhibiting ANG ribonuclease activity. Interacts with PCNA.</text>
</comment>
<comment type="subcellular location">
    <subcellularLocation>
        <location evidence="1">Secreted</location>
    </subcellularLocation>
    <subcellularLocation>
        <location evidence="1">Nucleus</location>
    </subcellularLocation>
    <subcellularLocation>
        <location evidence="1">Nucleus</location>
        <location evidence="1">Nucleolus</location>
    </subcellularLocation>
    <subcellularLocation>
        <location evidence="1">Cytoplasm</location>
        <location evidence="1">Stress granule</location>
    </subcellularLocation>
    <text evidence="1">The secreted protein is rapidly endocytosed by target cells following interaction with PLXNB2 receptor and translocated to the cytoplasm and nucleus. In the nucleus, accumulates in the nucleolus and binds to DNA.</text>
</comment>
<comment type="similarity">
    <text evidence="3">Belongs to the pancreatic ribonuclease family.</text>
</comment>
<accession>Q861Y2</accession>
<sequence>MVMGLGLFLLVFMLGLGLTPPTLAQDNSRYRDFLTKHYDATPQGRNDRYCESMMRRRGLTSPCKDINTFIHGNSRHIKAICGDENGNPYGENLRISKSPFQVTTCNLRGGSSRPPCRYRATAGFRNIVVACENDLPVHLDQSIFRP</sequence>
<name>ANGI_RHIBE</name>
<dbReference type="EC" id="3.1.27.-" evidence="1"/>
<dbReference type="EMBL" id="AY221131">
    <property type="protein sequence ID" value="AAO41338.1"/>
    <property type="molecule type" value="Genomic_DNA"/>
</dbReference>
<dbReference type="SMR" id="Q861Y2"/>
<dbReference type="Proteomes" id="UP000233180">
    <property type="component" value="Unplaced"/>
</dbReference>
<dbReference type="GO" id="GO:0032311">
    <property type="term" value="C:angiogenin-PRI complex"/>
    <property type="evidence" value="ECO:0000250"/>
    <property type="project" value="UniProtKB"/>
</dbReference>
<dbReference type="GO" id="GO:0005604">
    <property type="term" value="C:basement membrane"/>
    <property type="evidence" value="ECO:0000250"/>
    <property type="project" value="UniProtKB"/>
</dbReference>
<dbReference type="GO" id="GO:0005737">
    <property type="term" value="C:cytoplasm"/>
    <property type="evidence" value="ECO:0000250"/>
    <property type="project" value="UniProtKB"/>
</dbReference>
<dbReference type="GO" id="GO:0010494">
    <property type="term" value="C:cytoplasmic stress granule"/>
    <property type="evidence" value="ECO:0007669"/>
    <property type="project" value="UniProtKB-SubCell"/>
</dbReference>
<dbReference type="GO" id="GO:0030139">
    <property type="term" value="C:endocytic vesicle"/>
    <property type="evidence" value="ECO:0000250"/>
    <property type="project" value="UniProtKB"/>
</dbReference>
<dbReference type="GO" id="GO:0005615">
    <property type="term" value="C:extracellular space"/>
    <property type="evidence" value="ECO:0000250"/>
    <property type="project" value="UniProtKB"/>
</dbReference>
<dbReference type="GO" id="GO:0005730">
    <property type="term" value="C:nucleolus"/>
    <property type="evidence" value="ECO:0000250"/>
    <property type="project" value="UniProtKB"/>
</dbReference>
<dbReference type="GO" id="GO:0005634">
    <property type="term" value="C:nucleus"/>
    <property type="evidence" value="ECO:0000250"/>
    <property type="project" value="UniProtKB"/>
</dbReference>
<dbReference type="GO" id="GO:0003779">
    <property type="term" value="F:actin binding"/>
    <property type="evidence" value="ECO:0000250"/>
    <property type="project" value="UniProtKB"/>
</dbReference>
<dbReference type="GO" id="GO:0005507">
    <property type="term" value="F:copper ion binding"/>
    <property type="evidence" value="ECO:0000250"/>
    <property type="project" value="UniProtKB"/>
</dbReference>
<dbReference type="GO" id="GO:0003677">
    <property type="term" value="F:DNA binding"/>
    <property type="evidence" value="ECO:0007669"/>
    <property type="project" value="UniProtKB-KW"/>
</dbReference>
<dbReference type="GO" id="GO:0004519">
    <property type="term" value="F:endonuclease activity"/>
    <property type="evidence" value="ECO:0007669"/>
    <property type="project" value="UniProtKB-KW"/>
</dbReference>
<dbReference type="GO" id="GO:0008201">
    <property type="term" value="F:heparin binding"/>
    <property type="evidence" value="ECO:0000250"/>
    <property type="project" value="UniProtKB"/>
</dbReference>
<dbReference type="GO" id="GO:0042803">
    <property type="term" value="F:protein homodimerization activity"/>
    <property type="evidence" value="ECO:0000250"/>
    <property type="project" value="UniProtKB"/>
</dbReference>
<dbReference type="GO" id="GO:0004540">
    <property type="term" value="F:RNA nuclease activity"/>
    <property type="evidence" value="ECO:0000250"/>
    <property type="project" value="UniProtKB"/>
</dbReference>
<dbReference type="GO" id="GO:0005102">
    <property type="term" value="F:signaling receptor binding"/>
    <property type="evidence" value="ECO:0000250"/>
    <property type="project" value="UniProtKB"/>
</dbReference>
<dbReference type="GO" id="GO:0004549">
    <property type="term" value="F:tRNA-specific ribonuclease activity"/>
    <property type="evidence" value="ECO:0000250"/>
    <property type="project" value="UniProtKB"/>
</dbReference>
<dbReference type="GO" id="GO:0030041">
    <property type="term" value="P:actin filament polymerization"/>
    <property type="evidence" value="ECO:0000250"/>
    <property type="project" value="UniProtKB"/>
</dbReference>
<dbReference type="GO" id="GO:0001525">
    <property type="term" value="P:angiogenesis"/>
    <property type="evidence" value="ECO:0000250"/>
    <property type="project" value="UniProtKB"/>
</dbReference>
<dbReference type="GO" id="GO:0019731">
    <property type="term" value="P:antibacterial humoral response"/>
    <property type="evidence" value="ECO:0007669"/>
    <property type="project" value="TreeGrafter"/>
</dbReference>
<dbReference type="GO" id="GO:0061844">
    <property type="term" value="P:antimicrobial humoral immune response mediated by antimicrobial peptide"/>
    <property type="evidence" value="ECO:0007669"/>
    <property type="project" value="TreeGrafter"/>
</dbReference>
<dbReference type="GO" id="GO:0050830">
    <property type="term" value="P:defense response to Gram-positive bacterium"/>
    <property type="evidence" value="ECO:0007669"/>
    <property type="project" value="TreeGrafter"/>
</dbReference>
<dbReference type="GO" id="GO:0071425">
    <property type="term" value="P:hematopoietic stem cell proliferation"/>
    <property type="evidence" value="ECO:0000250"/>
    <property type="project" value="UniProtKB"/>
</dbReference>
<dbReference type="GO" id="GO:0045087">
    <property type="term" value="P:innate immune response"/>
    <property type="evidence" value="ECO:0007669"/>
    <property type="project" value="TreeGrafter"/>
</dbReference>
<dbReference type="GO" id="GO:0043066">
    <property type="term" value="P:negative regulation of apoptotic process"/>
    <property type="evidence" value="ECO:0000250"/>
    <property type="project" value="UniProtKB"/>
</dbReference>
<dbReference type="GO" id="GO:0048662">
    <property type="term" value="P:negative regulation of smooth muscle cell proliferation"/>
    <property type="evidence" value="ECO:0000250"/>
    <property type="project" value="UniProtKB"/>
</dbReference>
<dbReference type="GO" id="GO:0032055">
    <property type="term" value="P:negative regulation of translation in response to stress"/>
    <property type="evidence" value="ECO:0000250"/>
    <property type="project" value="UniProtKB"/>
</dbReference>
<dbReference type="GO" id="GO:0001938">
    <property type="term" value="P:positive regulation of endothelial cell proliferation"/>
    <property type="evidence" value="ECO:0000250"/>
    <property type="project" value="UniProtKB"/>
</dbReference>
<dbReference type="GO" id="GO:0050714">
    <property type="term" value="P:positive regulation of protein secretion"/>
    <property type="evidence" value="ECO:0000250"/>
    <property type="project" value="UniProtKB"/>
</dbReference>
<dbReference type="GO" id="GO:0001666">
    <property type="term" value="P:response to hypoxia"/>
    <property type="evidence" value="ECO:0000250"/>
    <property type="project" value="UniProtKB"/>
</dbReference>
<dbReference type="GO" id="GO:0009303">
    <property type="term" value="P:rRNA transcription"/>
    <property type="evidence" value="ECO:0000250"/>
    <property type="project" value="UniProtKB"/>
</dbReference>
<dbReference type="GO" id="GO:0023052">
    <property type="term" value="P:signaling"/>
    <property type="evidence" value="ECO:0000250"/>
    <property type="project" value="UniProtKB"/>
</dbReference>
<dbReference type="GO" id="GO:0034063">
    <property type="term" value="P:stress granule assembly"/>
    <property type="evidence" value="ECO:0000250"/>
    <property type="project" value="UniProtKB"/>
</dbReference>
<dbReference type="CDD" id="cd06265">
    <property type="entry name" value="RNase_A_canonical"/>
    <property type="match status" value="1"/>
</dbReference>
<dbReference type="FunFam" id="3.10.130.10:FF:000001">
    <property type="entry name" value="Ribonuclease pancreatic"/>
    <property type="match status" value="1"/>
</dbReference>
<dbReference type="Gene3D" id="3.10.130.10">
    <property type="entry name" value="Ribonuclease A-like domain"/>
    <property type="match status" value="1"/>
</dbReference>
<dbReference type="InterPro" id="IPR001427">
    <property type="entry name" value="RNaseA"/>
</dbReference>
<dbReference type="InterPro" id="IPR036816">
    <property type="entry name" value="RNaseA-like_dom_sf"/>
</dbReference>
<dbReference type="InterPro" id="IPR023411">
    <property type="entry name" value="RNaseA_AS"/>
</dbReference>
<dbReference type="InterPro" id="IPR023412">
    <property type="entry name" value="RNaseA_domain"/>
</dbReference>
<dbReference type="PANTHER" id="PTHR11437:SF60">
    <property type="entry name" value="ANGIOGENIN"/>
    <property type="match status" value="1"/>
</dbReference>
<dbReference type="PANTHER" id="PTHR11437">
    <property type="entry name" value="RIBONUCLEASE"/>
    <property type="match status" value="1"/>
</dbReference>
<dbReference type="Pfam" id="PF00074">
    <property type="entry name" value="RnaseA"/>
    <property type="match status" value="1"/>
</dbReference>
<dbReference type="PRINTS" id="PR00794">
    <property type="entry name" value="RIBONUCLEASE"/>
</dbReference>
<dbReference type="SMART" id="SM00092">
    <property type="entry name" value="RNAse_Pc"/>
    <property type="match status" value="1"/>
</dbReference>
<dbReference type="SUPFAM" id="SSF54076">
    <property type="entry name" value="RNase A-like"/>
    <property type="match status" value="1"/>
</dbReference>
<dbReference type="PROSITE" id="PS00127">
    <property type="entry name" value="RNASE_PANCREATIC"/>
    <property type="match status" value="1"/>
</dbReference>
<proteinExistence type="inferred from homology"/>
<reference key="1">
    <citation type="journal article" date="2003" name="Gene">
        <title>Pseudogenization of the tumor-growth promoter angiogenin in a leaf-eating monkey.</title>
        <authorList>
            <person name="Zhang J."/>
            <person name="Zhang Y.-P."/>
        </authorList>
    </citation>
    <scope>NUCLEOTIDE SEQUENCE [GENOMIC DNA]</scope>
</reference>
<keyword id="KW-0037">Angiogenesis</keyword>
<keyword id="KW-0963">Cytoplasm</keyword>
<keyword id="KW-0217">Developmental protein</keyword>
<keyword id="KW-0221">Differentiation</keyword>
<keyword id="KW-1015">Disulfide bond</keyword>
<keyword id="KW-0238">DNA-binding</keyword>
<keyword id="KW-0255">Endonuclease</keyword>
<keyword id="KW-0378">Hydrolase</keyword>
<keyword id="KW-0540">Nuclease</keyword>
<keyword id="KW-0539">Nucleus</keyword>
<keyword id="KW-0652">Protein synthesis inhibitor</keyword>
<keyword id="KW-0873">Pyrrolidone carboxylic acid</keyword>
<keyword id="KW-1185">Reference proteome</keyword>
<keyword id="KW-0964">Secreted</keyword>
<keyword id="KW-0732">Signal</keyword>
<keyword id="KW-0346">Stress response</keyword>
<gene>
    <name type="primary">ANG</name>
    <name type="synonym">RNASE5</name>
</gene>